<reference key="1">
    <citation type="journal article" date="2002" name="Nature">
        <title>The genome sequence of Schizosaccharomyces pombe.</title>
        <authorList>
            <person name="Wood V."/>
            <person name="Gwilliam R."/>
            <person name="Rajandream M.A."/>
            <person name="Lyne M.H."/>
            <person name="Lyne R."/>
            <person name="Stewart A."/>
            <person name="Sgouros J.G."/>
            <person name="Peat N."/>
            <person name="Hayles J."/>
            <person name="Baker S.G."/>
            <person name="Basham D."/>
            <person name="Bowman S."/>
            <person name="Brooks K."/>
            <person name="Brown D."/>
            <person name="Brown S."/>
            <person name="Chillingworth T."/>
            <person name="Churcher C.M."/>
            <person name="Collins M."/>
            <person name="Connor R."/>
            <person name="Cronin A."/>
            <person name="Davis P."/>
            <person name="Feltwell T."/>
            <person name="Fraser A."/>
            <person name="Gentles S."/>
            <person name="Goble A."/>
            <person name="Hamlin N."/>
            <person name="Harris D.E."/>
            <person name="Hidalgo J."/>
            <person name="Hodgson G."/>
            <person name="Holroyd S."/>
            <person name="Hornsby T."/>
            <person name="Howarth S."/>
            <person name="Huckle E.J."/>
            <person name="Hunt S."/>
            <person name="Jagels K."/>
            <person name="James K.D."/>
            <person name="Jones L."/>
            <person name="Jones M."/>
            <person name="Leather S."/>
            <person name="McDonald S."/>
            <person name="McLean J."/>
            <person name="Mooney P."/>
            <person name="Moule S."/>
            <person name="Mungall K.L."/>
            <person name="Murphy L.D."/>
            <person name="Niblett D."/>
            <person name="Odell C."/>
            <person name="Oliver K."/>
            <person name="O'Neil S."/>
            <person name="Pearson D."/>
            <person name="Quail M.A."/>
            <person name="Rabbinowitsch E."/>
            <person name="Rutherford K.M."/>
            <person name="Rutter S."/>
            <person name="Saunders D."/>
            <person name="Seeger K."/>
            <person name="Sharp S."/>
            <person name="Skelton J."/>
            <person name="Simmonds M.N."/>
            <person name="Squares R."/>
            <person name="Squares S."/>
            <person name="Stevens K."/>
            <person name="Taylor K."/>
            <person name="Taylor R.G."/>
            <person name="Tivey A."/>
            <person name="Walsh S.V."/>
            <person name="Warren T."/>
            <person name="Whitehead S."/>
            <person name="Woodward J.R."/>
            <person name="Volckaert G."/>
            <person name="Aert R."/>
            <person name="Robben J."/>
            <person name="Grymonprez B."/>
            <person name="Weltjens I."/>
            <person name="Vanstreels E."/>
            <person name="Rieger M."/>
            <person name="Schaefer M."/>
            <person name="Mueller-Auer S."/>
            <person name="Gabel C."/>
            <person name="Fuchs M."/>
            <person name="Duesterhoeft A."/>
            <person name="Fritzc C."/>
            <person name="Holzer E."/>
            <person name="Moestl D."/>
            <person name="Hilbert H."/>
            <person name="Borzym K."/>
            <person name="Langer I."/>
            <person name="Beck A."/>
            <person name="Lehrach H."/>
            <person name="Reinhardt R."/>
            <person name="Pohl T.M."/>
            <person name="Eger P."/>
            <person name="Zimmermann W."/>
            <person name="Wedler H."/>
            <person name="Wambutt R."/>
            <person name="Purnelle B."/>
            <person name="Goffeau A."/>
            <person name="Cadieu E."/>
            <person name="Dreano S."/>
            <person name="Gloux S."/>
            <person name="Lelaure V."/>
            <person name="Mottier S."/>
            <person name="Galibert F."/>
            <person name="Aves S.J."/>
            <person name="Xiang Z."/>
            <person name="Hunt C."/>
            <person name="Moore K."/>
            <person name="Hurst S.M."/>
            <person name="Lucas M."/>
            <person name="Rochet M."/>
            <person name="Gaillardin C."/>
            <person name="Tallada V.A."/>
            <person name="Garzon A."/>
            <person name="Thode G."/>
            <person name="Daga R.R."/>
            <person name="Cruzado L."/>
            <person name="Jimenez J."/>
            <person name="Sanchez M."/>
            <person name="del Rey F."/>
            <person name="Benito J."/>
            <person name="Dominguez A."/>
            <person name="Revuelta J.L."/>
            <person name="Moreno S."/>
            <person name="Armstrong J."/>
            <person name="Forsburg S.L."/>
            <person name="Cerutti L."/>
            <person name="Lowe T."/>
            <person name="McCombie W.R."/>
            <person name="Paulsen I."/>
            <person name="Potashkin J."/>
            <person name="Shpakovski G.V."/>
            <person name="Ussery D."/>
            <person name="Barrell B.G."/>
            <person name="Nurse P."/>
        </authorList>
    </citation>
    <scope>NUCLEOTIDE SEQUENCE [LARGE SCALE GENOMIC DNA]</scope>
    <source>
        <strain>972 / ATCC 24843</strain>
    </source>
</reference>
<reference key="2">
    <citation type="journal article" date="2008" name="Fungal Genet. Biol.">
        <title>Molecular phylogenetics of ascomycotal adhesins--a novel family of putative cell-surface adhesive proteins in fission yeasts.</title>
        <authorList>
            <person name="Linder T."/>
            <person name="Gustafsson C.M."/>
        </authorList>
    </citation>
    <scope>DOMAIN</scope>
    <scope>REPEATS</scope>
</reference>
<organism>
    <name type="scientific">Schizosaccharomyces pombe (strain 972 / ATCC 24843)</name>
    <name type="common">Fission yeast</name>
    <dbReference type="NCBI Taxonomy" id="284812"/>
    <lineage>
        <taxon>Eukaryota</taxon>
        <taxon>Fungi</taxon>
        <taxon>Dikarya</taxon>
        <taxon>Ascomycota</taxon>
        <taxon>Taphrinomycotina</taxon>
        <taxon>Schizosaccharomycetes</taxon>
        <taxon>Schizosaccharomycetales</taxon>
        <taxon>Schizosaccharomycetaceae</taxon>
        <taxon>Schizosaccharomyces</taxon>
    </lineage>
</organism>
<evidence type="ECO:0000250" key="1">
    <source>
        <dbReference type="UniProtKB" id="O74346"/>
    </source>
</evidence>
<evidence type="ECO:0000255" key="2"/>
<evidence type="ECO:0000255" key="3">
    <source>
        <dbReference type="PROSITE-ProRule" id="PRU00498"/>
    </source>
</evidence>
<evidence type="ECO:0000255" key="4">
    <source>
        <dbReference type="PROSITE-ProRule" id="PRU01164"/>
    </source>
</evidence>
<evidence type="ECO:0000303" key="5">
    <source>
    </source>
</evidence>
<evidence type="ECO:0000305" key="6"/>
<evidence type="ECO:0000305" key="7">
    <source>
    </source>
</evidence>
<evidence type="ECO:0000312" key="8">
    <source>
        <dbReference type="PomBase" id="SPAPB2C8.01"/>
    </source>
</evidence>
<feature type="signal peptide" evidence="2">
    <location>
        <begin position="1"/>
        <end position="21"/>
    </location>
</feature>
<feature type="chain" id="PRO_0000353809" description="Putative cell agglutination protein SPAPB2C8.01">
    <location>
        <begin position="22"/>
        <end position="1220"/>
    </location>
</feature>
<feature type="repeat" description="1" evidence="7">
    <location>
        <begin position="110"/>
        <end position="145"/>
    </location>
</feature>
<feature type="repeat" description="2" evidence="7">
    <location>
        <begin position="146"/>
        <end position="181"/>
    </location>
</feature>
<feature type="repeat" description="3" evidence="7">
    <location>
        <begin position="182"/>
        <end position="217"/>
    </location>
</feature>
<feature type="repeat" description="4" evidence="7">
    <location>
        <begin position="218"/>
        <end position="253"/>
    </location>
</feature>
<feature type="repeat" description="5" evidence="7">
    <location>
        <begin position="254"/>
        <end position="289"/>
    </location>
</feature>
<feature type="repeat" description="6" evidence="7">
    <location>
        <begin position="290"/>
        <end position="325"/>
    </location>
</feature>
<feature type="repeat" description="7" evidence="7">
    <location>
        <begin position="326"/>
        <end position="361"/>
    </location>
</feature>
<feature type="repeat" description="8" evidence="7">
    <location>
        <begin position="362"/>
        <end position="397"/>
    </location>
</feature>
<feature type="repeat" description="9" evidence="7">
    <location>
        <begin position="398"/>
        <end position="433"/>
    </location>
</feature>
<feature type="repeat" description="10" evidence="7">
    <location>
        <begin position="434"/>
        <end position="469"/>
    </location>
</feature>
<feature type="repeat" description="11" evidence="7">
    <location>
        <begin position="470"/>
        <end position="505"/>
    </location>
</feature>
<feature type="repeat" description="12" evidence="7">
    <location>
        <begin position="506"/>
        <end position="541"/>
    </location>
</feature>
<feature type="repeat" description="13" evidence="7">
    <location>
        <begin position="542"/>
        <end position="577"/>
    </location>
</feature>
<feature type="repeat" description="14" evidence="7">
    <location>
        <begin position="578"/>
        <end position="613"/>
    </location>
</feature>
<feature type="repeat" description="15" evidence="7">
    <location>
        <begin position="614"/>
        <end position="649"/>
    </location>
</feature>
<feature type="repeat" description="16" evidence="7">
    <location>
        <begin position="650"/>
        <end position="685"/>
    </location>
</feature>
<feature type="repeat" description="17" evidence="7">
    <location>
        <begin position="686"/>
        <end position="721"/>
    </location>
</feature>
<feature type="repeat" description="18" evidence="7">
    <location>
        <begin position="722"/>
        <end position="757"/>
    </location>
</feature>
<feature type="repeat" description="19" evidence="7">
    <location>
        <begin position="758"/>
        <end position="793"/>
    </location>
</feature>
<feature type="repeat" description="20" evidence="7">
    <location>
        <begin position="794"/>
        <end position="829"/>
    </location>
</feature>
<feature type="repeat" description="21" evidence="7">
    <location>
        <begin position="830"/>
        <end position="865"/>
    </location>
</feature>
<feature type="repeat" description="22" evidence="7">
    <location>
        <begin position="866"/>
        <end position="901"/>
    </location>
</feature>
<feature type="repeat" description="23" evidence="7">
    <location>
        <begin position="902"/>
        <end position="937"/>
    </location>
</feature>
<feature type="repeat" description="24" evidence="7">
    <location>
        <begin position="938"/>
        <end position="973"/>
    </location>
</feature>
<feature type="domain" description="PA14" evidence="4">
    <location>
        <begin position="1039"/>
        <end position="1202"/>
    </location>
</feature>
<feature type="region of interest" description="24 X 36 AA approximate tandem repeats" evidence="7">
    <location>
        <begin position="110"/>
        <end position="973"/>
    </location>
</feature>
<feature type="glycosylation site" description="N-linked (GlcNAc...) asparagine" evidence="3">
    <location>
        <position position="44"/>
    </location>
</feature>
<feature type="glycosylation site" description="N-linked (GlcNAc...) asparagine" evidence="3">
    <location>
        <position position="72"/>
    </location>
</feature>
<feature type="glycosylation site" description="N-linked (GlcNAc...) asparagine" evidence="3">
    <location>
        <position position="131"/>
    </location>
</feature>
<feature type="glycosylation site" description="N-linked (GlcNAc...) asparagine" evidence="3">
    <location>
        <position position="160"/>
    </location>
</feature>
<feature type="glycosylation site" description="N-linked (GlcNAc...) asparagine" evidence="3">
    <location>
        <position position="232"/>
    </location>
</feature>
<feature type="glycosylation site" description="N-linked (GlcNAc...) asparagine" evidence="3">
    <location>
        <position position="304"/>
    </location>
</feature>
<feature type="glycosylation site" description="N-linked (GlcNAc...) asparagine" evidence="3">
    <location>
        <position position="376"/>
    </location>
</feature>
<feature type="glycosylation site" description="N-linked (GlcNAc...) asparagine" evidence="3">
    <location>
        <position position="448"/>
    </location>
</feature>
<feature type="glycosylation site" description="N-linked (GlcNAc...) asparagine" evidence="3">
    <location>
        <position position="520"/>
    </location>
</feature>
<feature type="glycosylation site" description="N-linked (GlcNAc...) asparagine" evidence="3">
    <location>
        <position position="592"/>
    </location>
</feature>
<dbReference type="EMBL" id="CU329670">
    <property type="protein sequence ID" value="CAC36908.1"/>
    <property type="molecule type" value="Genomic_DNA"/>
</dbReference>
<dbReference type="RefSeq" id="NP_593987.1">
    <property type="nucleotide sequence ID" value="NM_001019413.2"/>
</dbReference>
<dbReference type="BioGRID" id="279778">
    <property type="interactions" value="4"/>
</dbReference>
<dbReference type="iPTMnet" id="Q9C0Y2"/>
<dbReference type="PaxDb" id="4896-SPAPB2C8.01.1"/>
<dbReference type="EnsemblFungi" id="SPAPB2C8.01.1">
    <property type="protein sequence ID" value="SPAPB2C8.01.1:pep"/>
    <property type="gene ID" value="SPAPB2C8.01"/>
</dbReference>
<dbReference type="KEGG" id="spo:2543356"/>
<dbReference type="PomBase" id="SPAPB2C8.01"/>
<dbReference type="VEuPathDB" id="FungiDB:SPAPB2C8.01"/>
<dbReference type="HOGENOM" id="CLU_268743_0_0_1"/>
<dbReference type="InParanoid" id="Q9C0Y2"/>
<dbReference type="OMA" id="AMESTRC"/>
<dbReference type="PRO" id="PR:Q9C0Y2"/>
<dbReference type="Proteomes" id="UP000002485">
    <property type="component" value="Chromosome I"/>
</dbReference>
<dbReference type="GO" id="GO:0009986">
    <property type="term" value="C:cell surface"/>
    <property type="evidence" value="ECO:0007669"/>
    <property type="project" value="UniProtKB-SubCell"/>
</dbReference>
<dbReference type="GO" id="GO:0000128">
    <property type="term" value="P:flocculation"/>
    <property type="evidence" value="ECO:0000318"/>
    <property type="project" value="GO_Central"/>
</dbReference>
<dbReference type="Gene3D" id="2.130.10.10">
    <property type="entry name" value="YVTN repeat-like/Quinoprotein amine dehydrogenase"/>
    <property type="match status" value="1"/>
</dbReference>
<dbReference type="InterPro" id="IPR018871">
    <property type="entry name" value="GLEYA_adhesin_domain"/>
</dbReference>
<dbReference type="InterPro" id="IPR011048">
    <property type="entry name" value="Haem_d1_sf"/>
</dbReference>
<dbReference type="InterPro" id="IPR037524">
    <property type="entry name" value="PA14/GLEYA"/>
</dbReference>
<dbReference type="InterPro" id="IPR051905">
    <property type="entry name" value="S_pombe_Mam3/Map4"/>
</dbReference>
<dbReference type="InterPro" id="IPR015943">
    <property type="entry name" value="WD40/YVTN_repeat-like_dom_sf"/>
</dbReference>
<dbReference type="InterPro" id="IPR036322">
    <property type="entry name" value="WD40_repeat_dom_sf"/>
</dbReference>
<dbReference type="PANTHER" id="PTHR31492">
    <property type="entry name" value="M CELL-TYPE AGGLUTINATION PROTEIN MAM3-RELATED"/>
    <property type="match status" value="1"/>
</dbReference>
<dbReference type="PANTHER" id="PTHR31492:SF14">
    <property type="entry name" value="M CELL-TYPE AGGLUTINATION PROTEIN MAM3-RELATED"/>
    <property type="match status" value="1"/>
</dbReference>
<dbReference type="Pfam" id="PF10528">
    <property type="entry name" value="GLEYA"/>
    <property type="match status" value="1"/>
</dbReference>
<dbReference type="SUPFAM" id="SSF51004">
    <property type="entry name" value="C-terminal (heme d1) domain of cytochrome cd1-nitrite reductase"/>
    <property type="match status" value="1"/>
</dbReference>
<dbReference type="SUPFAM" id="SSF50978">
    <property type="entry name" value="WD40 repeat-like"/>
    <property type="match status" value="2"/>
</dbReference>
<dbReference type="PROSITE" id="PS51820">
    <property type="entry name" value="PA14"/>
    <property type="match status" value="1"/>
</dbReference>
<accession>Q9C0Y2</accession>
<name>YKL1_SCHPO</name>
<protein>
    <recommendedName>
        <fullName evidence="6">Putative cell agglutination protein SPAPB2C8.01</fullName>
    </recommendedName>
    <alternativeName>
        <fullName evidence="5">Adhesin SPAPB2C8.01</fullName>
    </alternativeName>
</protein>
<keyword id="KW-0325">Glycoprotein</keyword>
<keyword id="KW-1185">Reference proteome</keyword>
<keyword id="KW-0677">Repeat</keyword>
<keyword id="KW-0732">Signal</keyword>
<proteinExistence type="inferred from homology"/>
<gene>
    <name evidence="8" type="ORF">SPAPB2C8.01</name>
</gene>
<sequence length="1220" mass="124087">MAVSRLLILICLYSFVTFAYPKVTQDYRNHLPIKFAKRSEVTPNTSLAQCPKYVTVYSSGSSHYISTIYPVNKTHHTEYTTLTDGSIDTYTITAKTDTGTDVVVVETSANTITTTLYSGSLEFTTTLDSANGTTPATIEVVEPAAGTVTTTIYSGTTPFNTTLASATDTVPGTVEVVEPEAGTVTTTVYSGTQEYTTTLATASGTVSGTVEVVDTAAGTVTTTIYSGTTPFNTTLASATDTVPGTVEVVEPEAGTVTTTVYSGTQEYTTTLATASGTVSGTVEVVDTAAGTVTTTIYSGTTPFNTTLASATDTVPGTVEVVEPEAGTVTTTVYSGTQEYTTTLATASGTVSGTVEVVDTAAGTVTTTIYSGTTPFNTTLASATDTVPGTVEVVEPEAGTVTTTVYSGTQEYTTTLATASGTVSGTVEVVDTAAGTVTTTIYSGTTPFNTTLASATDTVPGTVEVVEPEAGTVTTTVYSGTQEYTTTLATASGTVSGTVEVVDTAAGTVTTTIYSGTTPFNTTLASATDTVPGTVEVVEPEAGTVTTTVYSGTQEYTTTLATASGTVSGTVEVVDTAAGTVTTTIYSGTTPFNTTLASATDTVPGTVEVVEPEAGTVTTTVYSGTQEYTTTLATASGTVSGTVEVIEPAAGTVTTTVYSGTQEYTTTLATASGTVSGTVEVIEPAAGTVTSTVYSGTQEYTTTLATASGTVSGTVEVIEPAAGTVTTTVYSGTQEYTTTLATASGTVSGTVEVIEPAAGTVTTTVYSGSEVYTTTLASASESVPGTVEVVDPEAGSVTTTIYSGSVEYTTVLADASGSVTGTVEVVEPAAGTVTTTVYSGSEVYTTTLASASESVPGTVEVVDPEAGSVTTTIYSGSVEYTTVLADASGSVTGTVEVVEPAAGTVTGTLTSGSQFFTTTIAQASGSVSGNVEVIEPSGSTVTSTIYSGSESFTTTLAVGSGTIPGTVEVILPAPTTIYTGTVATTITYSSSSTPVSTVVVIPTAVCSGVRGLQYAVYNYDISASKSKFCVSSGNTDVAAFTQPAYFGSSSLDQSSPLFTGVLSSTAALPEWTSSYYLPDYPPDATAMESTRCNCKAIVYQFFFRVPYTDTYELNVYNVDDVFYGWFGDKAISGWSNTNYDAYAYWHVTTGQTGMGSFSMGTLTQGSFLPIRLIVANGGGKGGFNFDFSSSTDTYAATSYAYTATCTQSFLPFGLGNGGIDN</sequence>
<comment type="function">
    <text evidence="1">May be involved in agglutination during conjugation or other aspects of colony formation.</text>
</comment>
<comment type="subcellular location">
    <subcellularLocation>
        <location evidence="7">Cell surface</location>
    </subcellularLocation>
</comment>
<comment type="similarity">
    <text evidence="6">Belongs to the mam3/map4 family.</text>
</comment>